<sequence>MAVHVENLSDLAKTNDGVAVSLNRYTDWKCRSGVSEAPLIPASMMSKITDYAKTTAKGNSVALNYTHVVLSLAPTIGVAIPGHVTVELINPNVEGPFQVMSGQTLSWSPGAGKPCLMIFSVHHQLNSDHEPFRVRITNTGIPTKKSYARCHAYWGFDVGTRHRYYKSEPARLIELEVGYQRTLLSSIKAVEAYVQFTFDTSRMEKNPQLCTKSNVNIIPPKAETGSIRGIAPPLSVVPNQGRESKVLKQKGGTGSKTTKLPSLEPSSGSSSGLSMSRRSHRNVLNSSIPIKRNQDGNWLGDHLSDKGRVTDPNPERL</sequence>
<reference key="1">
    <citation type="journal article" date="1988" name="Nucleic Acids Res.">
        <title>The nucleotide sequence and gene organization of red clover necrotic mosaic virus RNA-2.</title>
        <authorList>
            <person name="Lommel S.A."/>
            <person name="Weston Fina M."/>
            <person name="Xiong Z."/>
            <person name="Lomonossoff G.P."/>
        </authorList>
    </citation>
    <scope>NUCLEOTIDE SEQUENCE [GENOMIC RNA]</scope>
    <source>
        <strain>Australian</strain>
    </source>
</reference>
<reference key="2">
    <citation type="journal article" date="1992" name="J. Gen. Virol.">
        <title>Cooperative binding of the red clover necrotic mosaic virus movement protein to single-stranded nucleic acids.</title>
        <authorList>
            <person name="Osman T.A."/>
            <person name="Hayes R.J."/>
            <person name="Buck K.W."/>
        </authorList>
    </citation>
    <scope>FUNCTION</scope>
    <scope>SSRNA AND SSDNA-BINDING</scope>
</reference>
<reference key="3">
    <citation type="journal article" date="2005" name="Virology">
        <title>Cell wall localization of Red clover necrotic mosaic virus movement protein is required for cell-to-cell movement.</title>
        <authorList>
            <person name="Tremblay D."/>
            <person name="Vaewhongs A.A."/>
            <person name="Turner K.A."/>
            <person name="Sit T.L."/>
            <person name="Lommel S.A."/>
        </authorList>
    </citation>
    <scope>FUNCTION</scope>
    <scope>SUBCELLULAR LOCATION</scope>
</reference>
<reference key="4">
    <citation type="journal article" date="2008" name="Virology">
        <title>The Red clover necrotic mosaic virus RNA-2 encoded movement protein is a second suppressor of RNA silencing.</title>
        <authorList>
            <person name="Powers J.G."/>
            <person name="Sit T.L."/>
            <person name="Heinsohn C."/>
            <person name="George C.G."/>
            <person name="Kim K.-H."/>
            <person name="Lommel S.A."/>
        </authorList>
    </citation>
    <scope>FUNCTION</scope>
</reference>
<reference key="5">
    <citation type="journal article" date="2009" name="Virology">
        <title>Endoplasmic reticulum targeting of the Red clover necrotic mosaic virus movement protein is associated with the replication of viral RNA1 but not that of RNA2.</title>
        <authorList>
            <person name="Kaido M."/>
            <person name="Tsuno Y."/>
            <person name="Mise K."/>
            <person name="Okuno T."/>
        </authorList>
    </citation>
    <scope>FUNCTION</scope>
    <scope>SUBCELLULAR LOCATION</scope>
</reference>
<reference key="6">
    <citation type="journal article" date="2011" name="Virology">
        <title>Viral cell-to-cell movement requires formation of cortical punctate structures containing Red clover necrotic mosaic virus movement protein.</title>
        <authorList>
            <person name="Kaido M."/>
            <person name="Funatsu N."/>
            <person name="Tsuno Y."/>
            <person name="Mise K."/>
            <person name="Okuno T."/>
        </authorList>
    </citation>
    <scope>FUNCTION</scope>
    <scope>SUBCELLULAR LOCATION</scope>
    <scope>DOMAIN</scope>
</reference>
<reference key="7">
    <citation type="journal article" date="2014" name="PLoS Pathog.">
        <title>GAPDH--a recruits a plant virus movement protein to cortical virus replication complexes to facilitate viral cell-to-cell movement.</title>
        <authorList>
            <person name="Kaido M."/>
            <person name="Abe K."/>
            <person name="Mine A."/>
            <person name="Hyodo K."/>
            <person name="Taniguchi T."/>
            <person name="Taniguchi H."/>
            <person name="Mise K."/>
            <person name="Okuno T."/>
        </authorList>
    </citation>
    <scope>FUNCTION</scope>
    <scope>SUBCELLULAR LOCATION</scope>
    <scope>INTERACTION WITH HOST NBGAPDH-A</scope>
</reference>
<organism>
    <name type="scientific">Red clover necrotic mosaic virus</name>
    <name type="common">RCNMV</name>
    <dbReference type="NCBI Taxonomy" id="12267"/>
    <lineage>
        <taxon>Viruses</taxon>
        <taxon>Riboviria</taxon>
        <taxon>Orthornavirae</taxon>
        <taxon>Kitrinoviricota</taxon>
        <taxon>Tolucaviricetes</taxon>
        <taxon>Tolivirales</taxon>
        <taxon>Tombusviridae</taxon>
        <taxon>Regressovirinae</taxon>
        <taxon>Dianthovirus</taxon>
        <taxon>Dianthovirus trifolii</taxon>
    </lineage>
</organism>
<name>MP_RCNMV</name>
<proteinExistence type="evidence at protein level"/>
<organismHost>
    <name type="scientific">Medicago sativa</name>
    <name type="common">Alfalfa</name>
    <dbReference type="NCBI Taxonomy" id="3879"/>
</organismHost>
<organismHost>
    <name type="scientific">Melilotus officinalis</name>
    <name type="common">Yellow sweet clover</name>
    <name type="synonym">Trifolium officinale</name>
    <dbReference type="NCBI Taxonomy" id="47083"/>
</organismHost>
<organismHost>
    <name type="scientific">Trifolium pratense</name>
    <name type="common">Red clover</name>
    <dbReference type="NCBI Taxonomy" id="57577"/>
</organismHost>
<organismHost>
    <name type="scientific">Trifolium repens</name>
    <name type="common">Creeping white clover</name>
    <dbReference type="NCBI Taxonomy" id="3899"/>
</organismHost>
<keyword id="KW-1038">Host endoplasmic reticulum</keyword>
<keyword id="KW-1043">Host membrane</keyword>
<keyword id="KW-0945">Host-virus interaction</keyword>
<keyword id="KW-1090">Inhibition of host innate immune response by virus</keyword>
<keyword id="KW-0472">Membrane</keyword>
<keyword id="KW-1185">Reference proteome</keyword>
<keyword id="KW-0941">Suppressor of RNA silencing</keyword>
<keyword id="KW-0813">Transport</keyword>
<keyword id="KW-0899">Viral immunoevasion</keyword>
<keyword id="KW-0916">Viral movement protein</keyword>
<evidence type="ECO:0000256" key="1">
    <source>
        <dbReference type="SAM" id="MobiDB-lite"/>
    </source>
</evidence>
<evidence type="ECO:0000269" key="2">
    <source>
    </source>
</evidence>
<evidence type="ECO:0000269" key="3">
    <source>
    </source>
</evidence>
<evidence type="ECO:0000269" key="4">
    <source>
    </source>
</evidence>
<evidence type="ECO:0000269" key="5">
    <source>
    </source>
</evidence>
<evidence type="ECO:0000269" key="6">
    <source>
    </source>
</evidence>
<evidence type="ECO:0000269" key="7">
    <source>
    </source>
</evidence>
<accession>P10838</accession>
<protein>
    <recommendedName>
        <fullName>Movement protein</fullName>
        <shortName>MP</shortName>
    </recommendedName>
</protein>
<feature type="chain" id="PRO_0000222898" description="Movement protein">
    <location>
        <begin position="1"/>
        <end position="317"/>
    </location>
</feature>
<feature type="region of interest" description="Disordered" evidence="1">
    <location>
        <begin position="223"/>
        <end position="317"/>
    </location>
</feature>
<feature type="compositionally biased region" description="Low complexity" evidence="1">
    <location>
        <begin position="255"/>
        <end position="276"/>
    </location>
</feature>
<feature type="compositionally biased region" description="Basic and acidic residues" evidence="1">
    <location>
        <begin position="302"/>
        <end position="317"/>
    </location>
</feature>
<dbReference type="EMBL" id="X08021">
    <property type="protein sequence ID" value="CAA30822.1"/>
    <property type="molecule type" value="Genomic_RNA"/>
</dbReference>
<dbReference type="PIR" id="S01412">
    <property type="entry name" value="S01412"/>
</dbReference>
<dbReference type="RefSeq" id="NP_620546.1">
    <property type="nucleotide sequence ID" value="NC_003775.1"/>
</dbReference>
<dbReference type="KEGG" id="vg:956633"/>
<dbReference type="OrthoDB" id="29893at10239"/>
<dbReference type="Proteomes" id="UP000008651">
    <property type="component" value="Genome"/>
</dbReference>
<dbReference type="GO" id="GO:0044167">
    <property type="term" value="C:host cell endoplasmic reticulum membrane"/>
    <property type="evidence" value="ECO:0007669"/>
    <property type="project" value="UniProtKB-SubCell"/>
</dbReference>
<dbReference type="GO" id="GO:0044158">
    <property type="term" value="C:host cell wall"/>
    <property type="evidence" value="ECO:0007669"/>
    <property type="project" value="UniProtKB-SubCell"/>
</dbReference>
<dbReference type="GO" id="GO:0016020">
    <property type="term" value="C:membrane"/>
    <property type="evidence" value="ECO:0007669"/>
    <property type="project" value="UniProtKB-KW"/>
</dbReference>
<dbReference type="GO" id="GO:0052170">
    <property type="term" value="P:symbiont-mediated suppression of host innate immune response"/>
    <property type="evidence" value="ECO:0007669"/>
    <property type="project" value="UniProtKB-KW"/>
</dbReference>
<dbReference type="GO" id="GO:0046740">
    <property type="term" value="P:transport of virus in host, cell to cell"/>
    <property type="evidence" value="ECO:0007669"/>
    <property type="project" value="UniProtKB-KW"/>
</dbReference>
<dbReference type="InterPro" id="IPR000603">
    <property type="entry name" value="MPV"/>
</dbReference>
<dbReference type="Pfam" id="PF00803">
    <property type="entry name" value="3A"/>
    <property type="match status" value="1"/>
</dbReference>
<gene>
    <name type="ORF">ORF3</name>
</gene>
<comment type="function">
    <text evidence="2 3 4 5 6 7">Plays an essential role in cell-to-cell movement and long-distance transport of the viral genome. Mechanistically, movement protein is recruited by viral replicase complexes formed on RNA1 to punctate structures on the host cortical endoplasmic reticulum. In turn, interacts with the viral genome and mediates virion movement from cell to cell. Also acts as a suppressor of RNA-mediated gene silencing, also known as post-transcriptional gene silencing (PTGS), a mechanism of plant viral defense that limits the accumulation of viral RNAs.</text>
</comment>
<comment type="subunit">
    <text evidence="7">Interacts with host glyceraldehyde 3-phosphate dehydrogenase-A/NbGAPDH-A; this interaction plays a positive role in cell-to-cell movement of the virus.</text>
</comment>
<comment type="subcellular location">
    <subcellularLocation>
        <location evidence="3">Host cell wall</location>
    </subcellularLocation>
    <subcellularLocation>
        <location evidence="5 6">Host endoplasmic reticulum membrane</location>
    </subcellularLocation>
    <text evidence="5">Targeting of virus movement protein to the host endoplasmic reticulum membrane is associated with the replication of viral RNA-1 but not that of RNA-2.</text>
</comment>
<comment type="domain">
    <text evidence="6">The C-terminal domain is essential for localization to cortical punctate structures at an early stage of infection.</text>
</comment>